<proteinExistence type="evidence at transcript level"/>
<evidence type="ECO:0000250" key="1">
    <source>
        <dbReference type="UniProtKB" id="Q9SUQ8"/>
    </source>
</evidence>
<evidence type="ECO:0000255" key="2"/>
<evidence type="ECO:0000255" key="3">
    <source>
        <dbReference type="PROSITE-ProRule" id="PRU00498"/>
    </source>
</evidence>
<evidence type="ECO:0000269" key="4">
    <source>
    </source>
</evidence>
<evidence type="ECO:0000303" key="5">
    <source>
    </source>
</evidence>
<evidence type="ECO:0000305" key="6"/>
<evidence type="ECO:0000312" key="7">
    <source>
        <dbReference type="EMBL" id="KRH67111.1"/>
    </source>
</evidence>
<feature type="signal peptide" evidence="2">
    <location>
        <begin position="1"/>
        <end position="21"/>
    </location>
</feature>
<feature type="chain" id="PRO_5014485865" description="Pterocarpan synthase 1">
    <location>
        <begin position="22"/>
        <end position="186"/>
    </location>
</feature>
<feature type="glycosylation site" description="N-linked (GlcNAc...) asparagine" evidence="3">
    <location>
        <position position="125"/>
    </location>
</feature>
<feature type="sequence conflict" description="In Ref. 1; ACU15747." evidence="6" ref="1">
    <original>T</original>
    <variation>A</variation>
    <location>
        <position position="51"/>
    </location>
</feature>
<protein>
    <recommendedName>
        <fullName evidence="5">Pterocarpan synthase 1</fullName>
        <shortName evidence="5">GmPTS1</shortName>
        <ecNumber evidence="4">4.2.1.139</ecNumber>
    </recommendedName>
    <alternativeName>
        <fullName evidence="6">Dirigent protein</fullName>
    </alternativeName>
</protein>
<sequence length="186" mass="20511">MAKSTFFVCLNLSLLFSLVTATYYSSLTPTLLGFREEQFTHLHFFFHDVVTGPKPSMVFIAEPNGKAKDALPFGTVVAMDDPLTVGPEQDSKLVGKAQGIYTSISQEEMGLMMVMTMAFTDGDFNGSTISVLGRNMIMSEPVREMAIVGGTGAFRFARGYAQARFYSVDFTKGDAIVEYDVFVNHY</sequence>
<comment type="function">
    <text evidence="1 4">Involved in pterocarpan phytoalexin biosynthesis (PubMed:28394400). Catalyzes the last step in the biosynthesis of the phytoalexin medicarpin, and thereby contributes to plant defense reactions (PubMed:28394400). Dirigent proteins impart stereoselectivity on the phenoxy radical-coupling reaction, yielding optically active lignans from two molecules of coniferyl alcohol in the biosynthesis of lignans, flavonolignans, and alkaloids and thus plays a central role in plant secondary metabolism (By similarity).</text>
</comment>
<comment type="catalytic activity">
    <reaction evidence="4">
        <text>a (4R)-4,2'-dihydroxyisoflavan = a pterocarpan + H2O.</text>
        <dbReference type="EC" id="4.2.1.139"/>
    </reaction>
</comment>
<comment type="catalytic activity">
    <reaction evidence="4">
        <text>(3R,4R)-7,2'-dihydroxy-4'-methoxyisoflavanol = (-)-medicarpin + H2O</text>
        <dbReference type="Rhea" id="RHEA:35811"/>
        <dbReference type="ChEBI" id="CHEBI:100"/>
        <dbReference type="ChEBI" id="CHEBI:15377"/>
        <dbReference type="ChEBI" id="CHEBI:72646"/>
        <dbReference type="EC" id="4.2.1.139"/>
    </reaction>
    <physiologicalReaction direction="left-to-right" evidence="4">
        <dbReference type="Rhea" id="RHEA:35812"/>
    </physiologicalReaction>
</comment>
<comment type="catalytic activity">
    <reaction evidence="4">
        <text>(3R,4R)-3-(6-hydroxy-1,3-benzodioxol-5-yl)-3,4-dihydro-2H-chromene-4,7-diol = (-)-maackiain + H2O</text>
        <dbReference type="Rhea" id="RHEA:58924"/>
        <dbReference type="ChEBI" id="CHEBI:99"/>
        <dbReference type="ChEBI" id="CHEBI:15377"/>
        <dbReference type="ChEBI" id="CHEBI:142868"/>
        <dbReference type="EC" id="4.2.1.139"/>
    </reaction>
    <physiologicalReaction direction="left-to-right" evidence="4">
        <dbReference type="Rhea" id="RHEA:58925"/>
    </physiologicalReaction>
</comment>
<comment type="catalytic activity">
    <reaction evidence="4">
        <text>(3S,4R)-7,2'-dihydroxy-4'-methoxyisoflavanol = (+)-medicarpin + H2O</text>
        <dbReference type="Rhea" id="RHEA:58920"/>
        <dbReference type="ChEBI" id="CHEBI:6714"/>
        <dbReference type="ChEBI" id="CHEBI:15377"/>
        <dbReference type="ChEBI" id="CHEBI:142866"/>
        <dbReference type="EC" id="4.2.1.139"/>
    </reaction>
    <physiologicalReaction direction="left-to-right" evidence="4">
        <dbReference type="Rhea" id="RHEA:58921"/>
    </physiologicalReaction>
</comment>
<comment type="catalytic activity">
    <reaction evidence="4">
        <text>(3R,4R)-7,2',4'-trihydroxyisoflavanol = (6aR,11aR)-3,9-dihydroxypterocarpan + H2O</text>
        <dbReference type="Rhea" id="RHEA:58928"/>
        <dbReference type="ChEBI" id="CHEBI:15377"/>
        <dbReference type="ChEBI" id="CHEBI:15648"/>
        <dbReference type="ChEBI" id="CHEBI:142869"/>
        <dbReference type="EC" id="4.2.1.139"/>
    </reaction>
    <physiologicalReaction direction="left-to-right" evidence="4">
        <dbReference type="Rhea" id="RHEA:58929"/>
    </physiologicalReaction>
</comment>
<comment type="subunit">
    <text evidence="1">Homodimer.</text>
</comment>
<comment type="subcellular location">
    <subcellularLocation>
        <location evidence="6">Secreted</location>
        <location evidence="6">Extracellular space</location>
        <location evidence="6">Apoplast</location>
    </subcellularLocation>
</comment>
<comment type="induction">
    <text evidence="4">Induced in cell culture by yeast extract, an elicitor for medicarpin induction.</text>
</comment>
<comment type="similarity">
    <text evidence="1">Belongs to the plant dirigent protein family.</text>
</comment>
<keyword id="KW-0052">Apoplast</keyword>
<keyword id="KW-0325">Glycoprotein</keyword>
<keyword id="KW-0456">Lyase</keyword>
<keyword id="KW-0611">Plant defense</keyword>
<keyword id="KW-1185">Reference proteome</keyword>
<keyword id="KW-0964">Secreted</keyword>
<keyword id="KW-0732">Signal</keyword>
<dbReference type="EC" id="4.2.1.139" evidence="4"/>
<dbReference type="EMBL" id="BT091561">
    <property type="protein sequence ID" value="ACU15747.1"/>
    <property type="molecule type" value="mRNA"/>
</dbReference>
<dbReference type="EMBL" id="CM000836">
    <property type="protein sequence ID" value="KRH67111.1"/>
    <property type="molecule type" value="Genomic_DNA"/>
</dbReference>
<dbReference type="RefSeq" id="NP_001236934.2">
    <property type="nucleotide sequence ID" value="NM_001250005.4"/>
</dbReference>
<dbReference type="SMR" id="I1JNN8"/>
<dbReference type="FunCoup" id="I1JNN8">
    <property type="interactions" value="489"/>
</dbReference>
<dbReference type="GlyCosmos" id="I1JNN8">
    <property type="glycosylation" value="1 site, No reported glycans"/>
</dbReference>
<dbReference type="PaxDb" id="3847-GLYMA03G30390.1"/>
<dbReference type="EnsemblPlants" id="KRH67111">
    <property type="protein sequence ID" value="KRH67111"/>
    <property type="gene ID" value="GLYMA_03G147700"/>
</dbReference>
<dbReference type="GeneID" id="100500621"/>
<dbReference type="Gramene" id="KRH67111">
    <property type="protein sequence ID" value="KRH67111"/>
    <property type="gene ID" value="GLYMA_03G147700"/>
</dbReference>
<dbReference type="KEGG" id="gmx:100500621"/>
<dbReference type="eggNOG" id="ENOG502RXST">
    <property type="taxonomic scope" value="Eukaryota"/>
</dbReference>
<dbReference type="HOGENOM" id="CLU_087111_2_0_1"/>
<dbReference type="InParanoid" id="I1JNN8"/>
<dbReference type="OMA" id="FIAEPNG"/>
<dbReference type="OrthoDB" id="1864232at2759"/>
<dbReference type="Proteomes" id="UP000008827">
    <property type="component" value="Chromosome 3"/>
</dbReference>
<dbReference type="ExpressionAtlas" id="I1JNN8">
    <property type="expression patterns" value="baseline and differential"/>
</dbReference>
<dbReference type="GO" id="GO:0048046">
    <property type="term" value="C:apoplast"/>
    <property type="evidence" value="ECO:0007669"/>
    <property type="project" value="UniProtKB-SubCell"/>
</dbReference>
<dbReference type="GO" id="GO:0140859">
    <property type="term" value="F:pterocarpan synthase activity"/>
    <property type="evidence" value="ECO:0007669"/>
    <property type="project" value="UniProtKB-EC"/>
</dbReference>
<dbReference type="GO" id="GO:0006952">
    <property type="term" value="P:defense response"/>
    <property type="evidence" value="ECO:0007669"/>
    <property type="project" value="UniProtKB-KW"/>
</dbReference>
<dbReference type="GO" id="GO:0009699">
    <property type="term" value="P:phenylpropanoid biosynthetic process"/>
    <property type="evidence" value="ECO:0007669"/>
    <property type="project" value="UniProtKB-ARBA"/>
</dbReference>
<dbReference type="Gene3D" id="2.40.480.10">
    <property type="entry name" value="Allene oxide cyclase-like"/>
    <property type="match status" value="1"/>
</dbReference>
<dbReference type="InterPro" id="IPR044859">
    <property type="entry name" value="Allene_oxi_cyc_Dirigent"/>
</dbReference>
<dbReference type="InterPro" id="IPR004265">
    <property type="entry name" value="Dirigent"/>
</dbReference>
<dbReference type="PANTHER" id="PTHR21495">
    <property type="entry name" value="NUCLEOPORIN-RELATED"/>
    <property type="match status" value="1"/>
</dbReference>
<dbReference type="Pfam" id="PF03018">
    <property type="entry name" value="Dirigent"/>
    <property type="match status" value="1"/>
</dbReference>
<accession>I1JNN8</accession>
<accession>C6T2A3</accession>
<name>DIR_SOYBN</name>
<reference key="1">
    <citation type="submission" date="2009-08" db="EMBL/GenBank/DDBJ databases">
        <authorList>
            <person name="Cheung F."/>
            <person name="Xiao Y."/>
            <person name="Chan A."/>
            <person name="Moskal W."/>
            <person name="Town C.D."/>
        </authorList>
    </citation>
    <scope>NUCLEOTIDE SEQUENCE [MRNA]</scope>
</reference>
<reference key="2">
    <citation type="journal article" date="2010" name="Nature">
        <title>Genome sequence of the palaeopolyploid soybean.</title>
        <authorList>
            <person name="Schmutz J."/>
            <person name="Cannon S.B."/>
            <person name="Schlueter J."/>
            <person name="Ma J."/>
            <person name="Mitros T."/>
            <person name="Nelson W."/>
            <person name="Hyten D.L."/>
            <person name="Song Q."/>
            <person name="Thelen J.J."/>
            <person name="Cheng J."/>
            <person name="Xu D."/>
            <person name="Hellsten U."/>
            <person name="May G.D."/>
            <person name="Yu Y."/>
            <person name="Sakurai T."/>
            <person name="Umezawa T."/>
            <person name="Bhattacharyya M.K."/>
            <person name="Sandhu D."/>
            <person name="Valliyodan B."/>
            <person name="Lindquist E."/>
            <person name="Peto M."/>
            <person name="Grant D."/>
            <person name="Shu S."/>
            <person name="Goodstein D."/>
            <person name="Barry K."/>
            <person name="Futrell-Griggs M."/>
            <person name="Abernathy B."/>
            <person name="Du J."/>
            <person name="Tian Z."/>
            <person name="Zhu L."/>
            <person name="Gill N."/>
            <person name="Joshi T."/>
            <person name="Libault M."/>
            <person name="Sethuraman A."/>
            <person name="Zhang X.-C."/>
            <person name="Shinozaki K."/>
            <person name="Nguyen H.T."/>
            <person name="Wing R.A."/>
            <person name="Cregan P."/>
            <person name="Specht J."/>
            <person name="Grimwood J."/>
            <person name="Rokhsar D."/>
            <person name="Stacey G."/>
            <person name="Shoemaker R.C."/>
            <person name="Jackson S.A."/>
        </authorList>
    </citation>
    <scope>NUCLEOTIDE SEQUENCE [LARGE SCALE GENOMIC DNA]</scope>
    <source>
        <strain>cv. Williams 82</strain>
    </source>
</reference>
<reference key="3">
    <citation type="journal article" date="2017" name="Plant Cell Physiol.">
        <title>The missing link in leguminous pterocarpan biosynthesis is a dirigent domain-containing protein with isoflavanol dehydratase activity.</title>
        <authorList>
            <person name="Uchida K."/>
            <person name="Akashi T."/>
            <person name="Aoki T."/>
        </authorList>
    </citation>
    <scope>FUNCTION</scope>
    <scope>INDUCTION</scope>
</reference>
<organism>
    <name type="scientific">Glycine max</name>
    <name type="common">Soybean</name>
    <name type="synonym">Glycine hispida</name>
    <dbReference type="NCBI Taxonomy" id="3847"/>
    <lineage>
        <taxon>Eukaryota</taxon>
        <taxon>Viridiplantae</taxon>
        <taxon>Streptophyta</taxon>
        <taxon>Embryophyta</taxon>
        <taxon>Tracheophyta</taxon>
        <taxon>Spermatophyta</taxon>
        <taxon>Magnoliopsida</taxon>
        <taxon>eudicotyledons</taxon>
        <taxon>Gunneridae</taxon>
        <taxon>Pentapetalae</taxon>
        <taxon>rosids</taxon>
        <taxon>fabids</taxon>
        <taxon>Fabales</taxon>
        <taxon>Fabaceae</taxon>
        <taxon>Papilionoideae</taxon>
        <taxon>50 kb inversion clade</taxon>
        <taxon>NPAAA clade</taxon>
        <taxon>indigoferoid/millettioid clade</taxon>
        <taxon>Phaseoleae</taxon>
        <taxon>Glycine</taxon>
        <taxon>Glycine subgen. Soja</taxon>
    </lineage>
</organism>
<gene>
    <name evidence="5" type="primary">PTS1</name>
    <name evidence="7" type="ORF">GLYMA_03G147700</name>
</gene>